<organism>
    <name type="scientific">Mycoplasmopsis agalactiae (strain NCTC 10123 / CIP 59.7 / PG2)</name>
    <name type="common">Mycoplasma agalactiae</name>
    <dbReference type="NCBI Taxonomy" id="347257"/>
    <lineage>
        <taxon>Bacteria</taxon>
        <taxon>Bacillati</taxon>
        <taxon>Mycoplasmatota</taxon>
        <taxon>Mycoplasmoidales</taxon>
        <taxon>Metamycoplasmataceae</taxon>
        <taxon>Mycoplasmopsis</taxon>
    </lineage>
</organism>
<evidence type="ECO:0000255" key="1">
    <source>
        <dbReference type="HAMAP-Rule" id="MF_01325"/>
    </source>
</evidence>
<evidence type="ECO:0000256" key="2">
    <source>
        <dbReference type="SAM" id="MobiDB-lite"/>
    </source>
</evidence>
<evidence type="ECO:0000305" key="3"/>
<name>RL3_MYCAP</name>
<proteinExistence type="inferred from homology"/>
<protein>
    <recommendedName>
        <fullName evidence="1">Large ribosomal subunit protein uL3</fullName>
    </recommendedName>
    <alternativeName>
        <fullName evidence="3">50S ribosomal protein L3</fullName>
    </alternativeName>
</protein>
<gene>
    <name evidence="1" type="primary">rplC</name>
    <name type="ordered locus">MAG5460</name>
</gene>
<dbReference type="EMBL" id="CU179680">
    <property type="protein sequence ID" value="CAL59245.1"/>
    <property type="molecule type" value="Genomic_DNA"/>
</dbReference>
<dbReference type="RefSeq" id="WP_011949705.1">
    <property type="nucleotide sequence ID" value="NC_009497.1"/>
</dbReference>
<dbReference type="SMR" id="A5IYY6"/>
<dbReference type="STRING" id="347257.MAG5460"/>
<dbReference type="GeneID" id="93358290"/>
<dbReference type="KEGG" id="maa:MAG5460"/>
<dbReference type="HOGENOM" id="CLU_044142_4_0_14"/>
<dbReference type="Proteomes" id="UP000007065">
    <property type="component" value="Chromosome"/>
</dbReference>
<dbReference type="GO" id="GO:0022625">
    <property type="term" value="C:cytosolic large ribosomal subunit"/>
    <property type="evidence" value="ECO:0007669"/>
    <property type="project" value="TreeGrafter"/>
</dbReference>
<dbReference type="GO" id="GO:0019843">
    <property type="term" value="F:rRNA binding"/>
    <property type="evidence" value="ECO:0007669"/>
    <property type="project" value="UniProtKB-UniRule"/>
</dbReference>
<dbReference type="GO" id="GO:0003735">
    <property type="term" value="F:structural constituent of ribosome"/>
    <property type="evidence" value="ECO:0007669"/>
    <property type="project" value="InterPro"/>
</dbReference>
<dbReference type="GO" id="GO:0006412">
    <property type="term" value="P:translation"/>
    <property type="evidence" value="ECO:0007669"/>
    <property type="project" value="UniProtKB-UniRule"/>
</dbReference>
<dbReference type="FunFam" id="2.40.30.10:FF:000004">
    <property type="entry name" value="50S ribosomal protein L3"/>
    <property type="match status" value="1"/>
</dbReference>
<dbReference type="Gene3D" id="3.30.160.810">
    <property type="match status" value="1"/>
</dbReference>
<dbReference type="Gene3D" id="2.40.30.10">
    <property type="entry name" value="Translation factors"/>
    <property type="match status" value="1"/>
</dbReference>
<dbReference type="HAMAP" id="MF_01325_B">
    <property type="entry name" value="Ribosomal_uL3_B"/>
    <property type="match status" value="1"/>
</dbReference>
<dbReference type="InterPro" id="IPR000597">
    <property type="entry name" value="Ribosomal_uL3"/>
</dbReference>
<dbReference type="InterPro" id="IPR019927">
    <property type="entry name" value="Ribosomal_uL3_bac/org-type"/>
</dbReference>
<dbReference type="InterPro" id="IPR019926">
    <property type="entry name" value="Ribosomal_uL3_CS"/>
</dbReference>
<dbReference type="InterPro" id="IPR009000">
    <property type="entry name" value="Transl_B-barrel_sf"/>
</dbReference>
<dbReference type="NCBIfam" id="TIGR03625">
    <property type="entry name" value="L3_bact"/>
    <property type="match status" value="1"/>
</dbReference>
<dbReference type="PANTHER" id="PTHR11229">
    <property type="entry name" value="50S RIBOSOMAL PROTEIN L3"/>
    <property type="match status" value="1"/>
</dbReference>
<dbReference type="PANTHER" id="PTHR11229:SF16">
    <property type="entry name" value="LARGE RIBOSOMAL SUBUNIT PROTEIN UL3C"/>
    <property type="match status" value="1"/>
</dbReference>
<dbReference type="Pfam" id="PF00297">
    <property type="entry name" value="Ribosomal_L3"/>
    <property type="match status" value="1"/>
</dbReference>
<dbReference type="SUPFAM" id="SSF50447">
    <property type="entry name" value="Translation proteins"/>
    <property type="match status" value="1"/>
</dbReference>
<dbReference type="PROSITE" id="PS00474">
    <property type="entry name" value="RIBOSOMAL_L3"/>
    <property type="match status" value="1"/>
</dbReference>
<sequence length="267" mass="28811">MKGILGRKVGMTQIYTELGQRIPVTVVEVKPNVVSKVLTVEKNGYFATQLATVEKKAKRVNRPLAGQFIQAKTTPKQYIKEIRGMEGYELGQEVNASIFSAGELVDITGISKGKGFAGTIKRWNQHIGPKSHGGGGGSQPVRQTGSLGDISGNRVVKGMTMPGHLGSEKTTVQNLEIVKVDTVNNLLLVKGSIPGAKKSFVIIKQAVKGLPTKEAIKLVNVKEVVKMNELIEKAKKFNIEVTVGMTSAELEPLIHKAEEEQAAEGDK</sequence>
<feature type="chain" id="PRO_1000141891" description="Large ribosomal subunit protein uL3">
    <location>
        <begin position="1"/>
        <end position="267"/>
    </location>
</feature>
<feature type="region of interest" description="Disordered" evidence="2">
    <location>
        <begin position="124"/>
        <end position="147"/>
    </location>
</feature>
<comment type="function">
    <text evidence="1">One of the primary rRNA binding proteins, it binds directly near the 3'-end of the 23S rRNA, where it nucleates assembly of the 50S subunit.</text>
</comment>
<comment type="subunit">
    <text evidence="1">Part of the 50S ribosomal subunit. Forms a cluster with proteins L14 and L19.</text>
</comment>
<comment type="similarity">
    <text evidence="1">Belongs to the universal ribosomal protein uL3 family.</text>
</comment>
<accession>A5IYY6</accession>
<reference key="1">
    <citation type="journal article" date="2007" name="PLoS Genet.">
        <title>Being pathogenic, plastic, and sexual while living with a nearly minimal bacterial genome.</title>
        <authorList>
            <person name="Sirand-Pugnet P."/>
            <person name="Lartigue C."/>
            <person name="Marenda M."/>
            <person name="Jacob D."/>
            <person name="Barre A."/>
            <person name="Barbe V."/>
            <person name="Schenowitz C."/>
            <person name="Mangenot S."/>
            <person name="Couloux A."/>
            <person name="Segurens B."/>
            <person name="de Daruvar A."/>
            <person name="Blanchard A."/>
            <person name="Citti C."/>
        </authorList>
    </citation>
    <scope>NUCLEOTIDE SEQUENCE [LARGE SCALE GENOMIC DNA]</scope>
    <source>
        <strain>NCTC 10123 / CIP 59.7 / PG2</strain>
    </source>
</reference>
<keyword id="KW-1185">Reference proteome</keyword>
<keyword id="KW-0687">Ribonucleoprotein</keyword>
<keyword id="KW-0689">Ribosomal protein</keyword>
<keyword id="KW-0694">RNA-binding</keyword>
<keyword id="KW-0699">rRNA-binding</keyword>